<gene>
    <name evidence="34 37" type="primary">EIF2AK3</name>
    <name evidence="33" type="synonym">PEK</name>
    <name evidence="35" type="synonym">PERK</name>
</gene>
<sequence length="1116" mass="125216">MERAISPGLLVRALLLLLLLLGLAARTVAAGRARGLPAPTAEAAFGLGAAAAPTSATRVPAAGAVAAAEVTVEDAEALPAAAGEQEPRGPEPDDETELRPRGRSLVIISTLDGRIAALDPENHGKKQWDLDVGSGSLVSSSLSKPEVFGNKMIIPSLDGALFQWDQDRESMETVPFTVESLLESSYKFGDDVVLVGGKSLTTYGLSAYSGKVRYICSALGCRQWDSDEMEQEEDILLLQRTQKTVRAVGPRSGNEKWNFSVGHFELRYIPDMETRAGFIESTFKPNENTEESKIISDVEEQEAAIMDIVIKVSVADWKVMAFSKKGGHLEWEYQFCTPIASAWLLKDGKVIPISLFDDTSYTSNDDVLEDEEDIVEAARGATENSVYLGMYRGQLYLQSSVRISEKFPSSPKALESVTNENAIIPLPTIKWKPLIHSPSRTPVLVGSDEFDKCLSNDKFSHEEYSNGALSILQYPYDNGYYLPYYKRERNKRSTQITVRFLDNPHYNKNIRKKDPVLLLHWWKEIVATILFCIIATTFIVRRLFHPHPHRQRKESETQCQTENKYDSVSGEANDSSWNDIKNSGYISRYLTDFEPIQCLGRGGFGVVFEAKNKVDDCNYAIKRIRLPNRELAREKVMREVKALAKLEHPGIVRYFNAWLEAPPEKWQEKMDEIWLKDESTDWPLSSPSPMDAPSVKIRRMDPFATKEHIEIIAPSPQRSRSFSVGISCDQTSSSESQFSPLEFSGMDHEDISESVDAAYNLQDSCLTDCDVEDGTMDGNDEGHSFELCPSEASPYVRSRERTSSSIVFEDSGCDNASSKEEPKTNRLHIGNHCANKLTAFKPTSSKSSSEATLSISPPRPTTLSLDLTKNTTEKLQPSSPKVYLYIQMQLCRKENLKDWMNGRCTIEERERSVCLHIFLQIAEAVEFLHSKGLMHRDLKPSNIFFTMDDVVKVGDFGLVTAMDQDEEEQTVLTPMPAYARHTGQVGTKLYMSPEQIHGNSYSHKVDIFSLGLILFELLYPFSTQMERVRTLTDVRNLKFPPLFTQKYPCEYVMVQDMLSPSPMERPEAINIIENAVFEDLDFPGKTVLRQRSRSLSSSGTKHSRQSNNSHSPLPSN</sequence>
<feature type="signal peptide" evidence="2">
    <location>
        <begin position="1"/>
        <end position="29"/>
    </location>
</feature>
<feature type="chain" id="PRO_0000024322" description="Eukaryotic translation initiation factor 2-alpha kinase 3">
    <location>
        <begin position="30"/>
        <end position="1116"/>
    </location>
</feature>
<feature type="topological domain" description="Lumenal" evidence="2">
    <location>
        <begin position="30"/>
        <end position="514"/>
    </location>
</feature>
<feature type="transmembrane region" description="Helical" evidence="2">
    <location>
        <begin position="515"/>
        <end position="535"/>
    </location>
</feature>
<feature type="topological domain" description="Cytoplasmic" evidence="2">
    <location>
        <begin position="536"/>
        <end position="1116"/>
    </location>
</feature>
<feature type="domain" description="Protein kinase" evidence="3">
    <location>
        <begin position="593"/>
        <end position="1077"/>
    </location>
</feature>
<feature type="region of interest" description="Disordered" evidence="5">
    <location>
        <begin position="77"/>
        <end position="101"/>
    </location>
</feature>
<feature type="region of interest" description="Disordered" evidence="5">
    <location>
        <begin position="550"/>
        <end position="571"/>
    </location>
</feature>
<feature type="region of interest" description="Insert loop" evidence="1">
    <location>
        <begin position="647"/>
        <end position="888"/>
    </location>
</feature>
<feature type="region of interest" description="Disordered" evidence="5">
    <location>
        <begin position="841"/>
        <end position="863"/>
    </location>
</feature>
<feature type="region of interest" description="Disordered" evidence="5">
    <location>
        <begin position="1090"/>
        <end position="1116"/>
    </location>
</feature>
<feature type="compositionally biased region" description="Low complexity" evidence="5">
    <location>
        <begin position="844"/>
        <end position="856"/>
    </location>
</feature>
<feature type="compositionally biased region" description="Polar residues" evidence="5">
    <location>
        <begin position="1105"/>
        <end position="1116"/>
    </location>
</feature>
<feature type="active site" description="Proton acceptor" evidence="3 4">
    <location>
        <position position="937"/>
    </location>
</feature>
<feature type="binding site" evidence="3">
    <location>
        <begin position="599"/>
        <end position="607"/>
    </location>
    <ligand>
        <name>ATP</name>
        <dbReference type="ChEBI" id="CHEBI:30616"/>
    </ligand>
</feature>
<feature type="binding site" evidence="3">
    <location>
        <position position="622"/>
    </location>
    <ligand>
        <name>ATP</name>
        <dbReference type="ChEBI" id="CHEBI:30616"/>
    </ligand>
</feature>
<feature type="modified residue" description="Phosphotyrosine; by autocatalysis" evidence="15">
    <location>
        <position position="619"/>
    </location>
</feature>
<feature type="modified residue" description="Phosphoserine" evidence="40">
    <location>
        <position position="715"/>
    </location>
</feature>
<feature type="modified residue" description="Phosphothreonine" evidence="1">
    <location>
        <position position="802"/>
    </location>
</feature>
<feature type="modified residue" description="Phosphothreonine" evidence="1">
    <location>
        <position position="982"/>
    </location>
</feature>
<feature type="modified residue" description="Phosphoserine" evidence="41">
    <location>
        <position position="1094"/>
    </location>
</feature>
<feature type="glycosylation site" description="N-linked (GlcNAc...) asparagine" evidence="2">
    <location>
        <position position="258"/>
    </location>
</feature>
<feature type="sequence variant" id="VAR_089927" description="In WRS." evidence="25">
    <location>
        <begin position="69"/>
        <end position="1116"/>
    </location>
</feature>
<feature type="sequence variant" id="VAR_011409" description="In dbSNP:rs867529." evidence="8 14">
    <original>S</original>
    <variation>C</variation>
    <location>
        <position position="136"/>
    </location>
</feature>
<feature type="sequence variant" id="VAR_011410" description="In dbSNP:rs13045." evidence="6 7 12">
    <original>Q</original>
    <variation>R</variation>
    <location>
        <position position="166"/>
    </location>
</feature>
<feature type="sequence variant" id="VAR_089928" description="In WRS." evidence="13">
    <location>
        <begin position="332"/>
        <end position="1116"/>
    </location>
</feature>
<feature type="sequence variant" id="VAR_089929" description="In WRS." evidence="22">
    <location>
        <begin position="334"/>
        <end position="1116"/>
    </location>
</feature>
<feature type="sequence variant" id="VAR_040477" description="In dbSNP:rs55791823." evidence="14">
    <original>D</original>
    <variation>V</variation>
    <location>
        <position position="566"/>
    </location>
</feature>
<feature type="sequence variant" id="VAR_011408" description="In WRS; dbSNP:rs121908569." evidence="8">
    <original>R</original>
    <variation>Q</variation>
    <location>
        <position position="588"/>
    </location>
</feature>
<feature type="sequence variant" id="VAR_089930" description="In WRS; uncertain significance." evidence="17">
    <original>W</original>
    <variation>S</variation>
    <location>
        <position position="658"/>
    </location>
</feature>
<feature type="sequence variant" id="VAR_011411" description="In dbSNP:rs1805165." evidence="6 7 12">
    <original>A</original>
    <variation>S</variation>
    <location>
        <position position="704"/>
    </location>
</feature>
<feature type="sequence variant" id="VAR_040478" description="In dbSNP:rs55861585." evidence="14">
    <original>P</original>
    <variation>L</variation>
    <location>
        <position position="716"/>
    </location>
</feature>
<feature type="sequence variant" id="VAR_089931" description="In WRS; decreased ability to phosphorylate EIF2S1/eIF-2-alpha." evidence="10">
    <original>S</original>
    <variation>P</variation>
    <location>
        <position position="878"/>
    </location>
</feature>
<feature type="sequence variant" id="VAR_089932" description="In WRS; uncertain significance." evidence="18">
    <location>
        <begin position="903"/>
        <end position="1116"/>
    </location>
</feature>
<feature type="sequence variant" id="VAR_089933" description="In WRS; uncertain significance." evidence="31">
    <original>P</original>
    <variation>S</variation>
    <location>
        <position position="940"/>
    </location>
</feature>
<feature type="sequence variant" id="VAR_089934" description="In WRS; uncertain significance." evidence="31">
    <original>E</original>
    <variation>Q</variation>
    <location>
        <position position="994"/>
    </location>
</feature>
<feature type="sequence variant" id="VAR_089935" description="In WRS." evidence="17">
    <location>
        <begin position="1065"/>
        <end position="1116"/>
    </location>
</feature>
<feature type="mutagenesis site" description="Decreased tetramerization and activation, leading to decreased ability to phosphorylate EIF2S1/eIF-2-alpha." evidence="20">
    <original>W</original>
    <variation>A</variation>
    <location>
        <position position="164"/>
    </location>
</feature>
<feature type="mutagenesis site" description="Decreased tetramerization and activation, leading to decreased ability to phosphorylate EIF2S1/eIF-2-alpha." evidence="20">
    <original>L</original>
    <variation>N</variation>
    <location>
        <position position="388"/>
    </location>
</feature>
<feature type="mutagenesis site" description="Decreased tetramerization and activation, leading to decreased ability to phosphorylate EIF2S1/eIF-2-alpha." evidence="20">
    <original>L</original>
    <variation>N</variation>
    <location>
        <position position="395"/>
    </location>
</feature>
<feature type="mutagenesis site" description="Decreased tetramerization and activation, leading to decreased ability to phosphorylate EIF2S1/eIF-2-alpha." evidence="20">
    <original>L</original>
    <variation>N</variation>
    <location>
        <position position="397"/>
    </location>
</feature>
<feature type="sequence conflict" description="In Ref. 1; AAD19961, 2; AAF61199, 3; AAF91480, 4; BAG37696 and 6; AAI26357." evidence="36" ref="1 2 3 4 6">
    <location>
        <position position="14"/>
    </location>
</feature>
<feature type="sequence conflict" description="In Ref. 2; AAF61199." evidence="36" ref="2">
    <original>N</original>
    <variation>H</variation>
    <location>
        <position position="490"/>
    </location>
</feature>
<feature type="strand" evidence="43">
    <location>
        <begin position="105"/>
        <end position="110"/>
    </location>
</feature>
<feature type="strand" evidence="43">
    <location>
        <begin position="113"/>
        <end position="118"/>
    </location>
</feature>
<feature type="turn" evidence="43">
    <location>
        <begin position="120"/>
        <end position="123"/>
    </location>
</feature>
<feature type="strand" evidence="43">
    <location>
        <begin position="126"/>
        <end position="131"/>
    </location>
</feature>
<feature type="strand" evidence="43">
    <location>
        <begin position="137"/>
        <end position="139"/>
    </location>
</feature>
<feature type="strand" evidence="43">
    <location>
        <begin position="152"/>
        <end position="158"/>
    </location>
</feature>
<feature type="strand" evidence="43">
    <location>
        <begin position="161"/>
        <end position="164"/>
    </location>
</feature>
<feature type="strand" evidence="43">
    <location>
        <begin position="166"/>
        <end position="169"/>
    </location>
</feature>
<feature type="strand" evidence="43">
    <location>
        <begin position="171"/>
        <end position="173"/>
    </location>
</feature>
<feature type="helix" evidence="43">
    <location>
        <begin position="178"/>
        <end position="182"/>
    </location>
</feature>
<feature type="strand" evidence="43">
    <location>
        <begin position="193"/>
        <end position="204"/>
    </location>
</feature>
<feature type="strand" evidence="43">
    <location>
        <begin position="207"/>
        <end position="209"/>
    </location>
</feature>
<feature type="strand" evidence="43">
    <location>
        <begin position="215"/>
        <end position="217"/>
    </location>
</feature>
<feature type="strand" evidence="43">
    <location>
        <begin position="220"/>
        <end position="222"/>
    </location>
</feature>
<feature type="strand" evidence="43">
    <location>
        <begin position="237"/>
        <end position="248"/>
    </location>
</feature>
<feature type="turn" evidence="43">
    <location>
        <begin position="250"/>
        <end position="252"/>
    </location>
</feature>
<feature type="strand" evidence="43">
    <location>
        <begin position="255"/>
        <end position="267"/>
    </location>
</feature>
<feature type="strand" evidence="43">
    <location>
        <begin position="308"/>
        <end position="310"/>
    </location>
</feature>
<feature type="turn" evidence="43">
    <location>
        <begin position="314"/>
        <end position="317"/>
    </location>
</feature>
<feature type="strand" evidence="43">
    <location>
        <begin position="321"/>
        <end position="323"/>
    </location>
</feature>
<feature type="turn" evidence="43">
    <location>
        <begin position="324"/>
        <end position="326"/>
    </location>
</feature>
<feature type="strand" evidence="43">
    <location>
        <begin position="339"/>
        <end position="346"/>
    </location>
</feature>
<feature type="strand" evidence="43">
    <location>
        <begin position="349"/>
        <end position="352"/>
    </location>
</feature>
<feature type="helix" evidence="43">
    <location>
        <begin position="375"/>
        <end position="383"/>
    </location>
</feature>
<feature type="strand" evidence="43">
    <location>
        <begin position="387"/>
        <end position="390"/>
    </location>
</feature>
<feature type="strand" evidence="43">
    <location>
        <begin position="392"/>
        <end position="398"/>
    </location>
</feature>
<feature type="helix" evidence="42">
    <location>
        <begin position="588"/>
        <end position="592"/>
    </location>
</feature>
<feature type="strand" evidence="42">
    <location>
        <begin position="593"/>
        <end position="602"/>
    </location>
</feature>
<feature type="strand" evidence="42">
    <location>
        <begin position="605"/>
        <end position="612"/>
    </location>
</feature>
<feature type="turn" evidence="42">
    <location>
        <begin position="613"/>
        <end position="615"/>
    </location>
</feature>
<feature type="strand" evidence="42">
    <location>
        <begin position="618"/>
        <end position="625"/>
    </location>
</feature>
<feature type="helix" evidence="42">
    <location>
        <begin position="630"/>
        <end position="644"/>
    </location>
</feature>
<feature type="strand" evidence="42">
    <location>
        <begin position="654"/>
        <end position="660"/>
    </location>
</feature>
<feature type="strand" evidence="42">
    <location>
        <begin position="883"/>
        <end position="889"/>
    </location>
</feature>
<feature type="helix" evidence="42">
    <location>
        <begin position="896"/>
        <end position="901"/>
    </location>
</feature>
<feature type="helix" evidence="42">
    <location>
        <begin position="906"/>
        <end position="908"/>
    </location>
</feature>
<feature type="helix" evidence="42">
    <location>
        <begin position="911"/>
        <end position="930"/>
    </location>
</feature>
<feature type="helix" evidence="42">
    <location>
        <begin position="940"/>
        <end position="942"/>
    </location>
</feature>
<feature type="strand" evidence="42">
    <location>
        <begin position="943"/>
        <end position="945"/>
    </location>
</feature>
<feature type="strand" evidence="42">
    <location>
        <begin position="951"/>
        <end position="953"/>
    </location>
</feature>
<feature type="helix" evidence="42">
    <location>
        <begin position="993"/>
        <end position="996"/>
    </location>
</feature>
<feature type="helix" evidence="42">
    <location>
        <begin position="1004"/>
        <end position="1018"/>
    </location>
</feature>
<feature type="helix" evidence="42">
    <location>
        <begin position="1024"/>
        <end position="1035"/>
    </location>
</feature>
<feature type="helix" evidence="42">
    <location>
        <begin position="1041"/>
        <end position="1046"/>
    </location>
</feature>
<feature type="helix" evidence="42">
    <location>
        <begin position="1048"/>
        <end position="1057"/>
    </location>
</feature>
<feature type="helix" evidence="42">
    <location>
        <begin position="1062"/>
        <end position="1064"/>
    </location>
</feature>
<feature type="helix" evidence="42">
    <location>
        <begin position="1068"/>
        <end position="1072"/>
    </location>
</feature>
<feature type="helix" evidence="42">
    <location>
        <begin position="1075"/>
        <end position="1077"/>
    </location>
</feature>
<comment type="function">
    <text evidence="1 6 7 9 10 20 23 27 30 32">Metabolic-stress sensing protein kinase that phosphorylates the alpha subunit of eukaryotic translation initiation factor 2 (EIF2S1/eIF-2-alpha) in response to various stress, such as unfolded protein response (UPR) (PubMed:10026192, PubMed:10677345, PubMed:11907036, PubMed:12086964, PubMed:25925385, PubMed:31023583). Key effector of the integrated stress response (ISR) to unfolded proteins: EIF2AK3/PERK specifically recognizes and binds misfolded proteins, leading to its activation and EIF2S1/eIF-2-alpha phosphorylation (PubMed:10677345, PubMed:27917829, PubMed:31023583). EIF2S1/eIF-2-alpha phosphorylation in response to stress converts EIF2S1/eIF-2-alpha in a global protein synthesis inhibitor, leading to a global attenuation of cap-dependent translation, while concomitantly initiating the preferential translation of ISR-specific mRNAs, such as the transcriptional activators ATF4 and QRICH1, and hence allowing ATF4- and QRICH1-mediated reprogramming (PubMed:10026192, PubMed:10677345, PubMed:31023583, PubMed:33384352). The EIF2AK3/PERK-mediated unfolded protein response increases mitochondrial oxidative phosphorylation by promoting ATF4-mediated expression of COX7A2L/SCAF1, thereby increasing formation of respiratory chain supercomplexes (PubMed:31023583). In contrast to most subcellular compartments, mitochondria are protected from the EIF2AK3/PERK-mediated unfolded protein response due to EIF2AK3/PERK inhibition by ATAD3A at mitochondria-endoplasmic reticulum contact sites (PubMed:39116259). In addition to EIF2S1/eIF-2-alpha, also phosphorylates NFE2L2/NRF2 in response to stress, promoting release of NFE2L2/NRF2 from the BCR(KEAP1) complex, leading to nuclear accumulation and activation of NFE2L2/NRF2 (By similarity). Serves as a critical effector of unfolded protein response (UPR)-induced G1 growth arrest due to the loss of cyclin-D1 (CCND1) (By similarity). Involved in control of mitochondrial morphology and function (By similarity).</text>
</comment>
<comment type="catalytic activity">
    <reaction evidence="6 7">
        <text>L-seryl-[protein] + ATP = O-phospho-L-seryl-[protein] + ADP + H(+)</text>
        <dbReference type="Rhea" id="RHEA:17989"/>
        <dbReference type="Rhea" id="RHEA-COMP:9863"/>
        <dbReference type="Rhea" id="RHEA-COMP:11604"/>
        <dbReference type="ChEBI" id="CHEBI:15378"/>
        <dbReference type="ChEBI" id="CHEBI:29999"/>
        <dbReference type="ChEBI" id="CHEBI:30616"/>
        <dbReference type="ChEBI" id="CHEBI:83421"/>
        <dbReference type="ChEBI" id="CHEBI:456216"/>
        <dbReference type="EC" id="2.7.11.1"/>
    </reaction>
    <physiologicalReaction direction="left-to-right" evidence="6 7">
        <dbReference type="Rhea" id="RHEA:17990"/>
    </physiologicalReaction>
</comment>
<comment type="catalytic activity">
    <reaction evidence="1">
        <text>L-threonyl-[protein] + ATP = O-phospho-L-threonyl-[protein] + ADP + H(+)</text>
        <dbReference type="Rhea" id="RHEA:46608"/>
        <dbReference type="Rhea" id="RHEA-COMP:11060"/>
        <dbReference type="Rhea" id="RHEA-COMP:11605"/>
        <dbReference type="ChEBI" id="CHEBI:15378"/>
        <dbReference type="ChEBI" id="CHEBI:30013"/>
        <dbReference type="ChEBI" id="CHEBI:30616"/>
        <dbReference type="ChEBI" id="CHEBI:61977"/>
        <dbReference type="ChEBI" id="CHEBI:456216"/>
        <dbReference type="EC" id="2.7.11.1"/>
    </reaction>
    <physiologicalReaction direction="left-to-right" evidence="1">
        <dbReference type="Rhea" id="RHEA:46609"/>
    </physiologicalReaction>
</comment>
<comment type="catalytic activity">
    <reaction evidence="1">
        <text>L-tyrosyl-[protein] + ATP = O-phospho-L-tyrosyl-[protein] + ADP + H(+)</text>
        <dbReference type="Rhea" id="RHEA:10596"/>
        <dbReference type="Rhea" id="RHEA-COMP:10136"/>
        <dbReference type="Rhea" id="RHEA-COMP:20101"/>
        <dbReference type="ChEBI" id="CHEBI:15378"/>
        <dbReference type="ChEBI" id="CHEBI:30616"/>
        <dbReference type="ChEBI" id="CHEBI:46858"/>
        <dbReference type="ChEBI" id="CHEBI:61978"/>
        <dbReference type="ChEBI" id="CHEBI:456216"/>
        <dbReference type="EC" id="2.7.10.2"/>
    </reaction>
    <physiologicalReaction direction="left-to-right" evidence="1">
        <dbReference type="Rhea" id="RHEA:10597"/>
    </physiologicalReaction>
</comment>
<comment type="activity regulation">
    <text evidence="1 9 32">Inhibited by HSPA5/BIP in absence of stress (PubMed:11907036). Perturbation in protein folding in the endoplasmic reticulum (ER) promotes reversible dissociation from HSPA5/BIP and oligomerization, resulting in trans-autophosphorylation and kinase activity induction (PubMed:11907036). Inactivated following phosphorylation at Thr-802 by AKT (AKT1, AKT2 and/or AKT3) (By similarity). Inhibited by ATAD3A at mitochondria-endoplasmic reticulum contact sites, providing a safe haven for mitochondrial protein translation during ER stress (PubMed:39116259).</text>
</comment>
<comment type="subunit">
    <text evidence="1 9 19 20 21 28 32">Forms dimers with HSPA5/BIP in resting cells (PubMed:11907036). Homotetramerizes in response to endoplasmic reticulum (ER) stress, leading to its activation (PubMed:25925385). Interacts with HSP90B1/GRP94 (PubMed:11907036). Interacts with DNAJC3; inhibiting EIF2AK3/PERK activity (By similarity). Interacts with ATAD3A; ATAD3A and EIF2S1/eIF-2-alpha occupy a common binding site within the cytoplasmic loop of EIF2AK3/PERK, leading to prevent EIF2AK3/PERK association with its substrate EIF2S1/eIF-2-alpha (PubMed:39116259). Interacts with MFN2 (By similarity). Interacts with TMEM33 (PubMed:26268696). Interacts with PDIA6 (PubMed:24508390). Interacts with LACC1 (PubMed:31875558).</text>
</comment>
<comment type="interaction">
    <interactant intactId="EBI-766076">
        <id>Q9NZJ5</id>
    </interactant>
    <interactant intactId="EBI-766076">
        <id>Q9NZJ5</id>
        <label>EIF2AK3</label>
    </interactant>
    <organismsDiffer>false</organismsDiffer>
    <experiments>2</experiments>
</comment>
<comment type="interaction">
    <interactant intactId="EBI-766076">
        <id>Q9NZJ5</id>
    </interactant>
    <interactant intactId="EBI-354921">
        <id>P11021</id>
        <label>HSPA5</label>
    </interactant>
    <organismsDiffer>false</organismsDiffer>
    <experiments>4</experiments>
</comment>
<comment type="subcellular location">
    <subcellularLocation>
        <location evidence="1">Endoplasmic reticulum membrane</location>
        <topology evidence="2">Single-pass type I membrane protein</topology>
    </subcellularLocation>
    <text evidence="1 32">Localizes to the Localizes to endoplasmic reticulum membrane (By similarity). Also present at mitochondria-endoplasmic reticulum contact sites; where it interacts with ATAD3A (PubMed:39116259).</text>
</comment>
<comment type="tissue specificity">
    <text evidence="6 7">Ubiquitous. A high level expression is seen in secretory tissues.</text>
</comment>
<comment type="induction">
    <text evidence="7">By endoplasmic reticulum stress.</text>
</comment>
<comment type="domain">
    <text evidence="1">The lumenal domain senses perturbations in protein folding in the ER, probably through reversible interaction with HSPA5/BIP.</text>
</comment>
<comment type="domain">
    <text evidence="1">The insert loop specifically recongnizes and binds EIF2S1/eIF-2-alpha.</text>
</comment>
<comment type="PTM">
    <text evidence="1 15">Oligomerization of the N-terminal ER luminal domain by ER stress promotes EIF2AK3/PERK trans-autophosphorylation of the C-terminal cytoplasmic kinase domain at multiple residues including Thr-982 on the kinase activation loop (By similarity). Autophosphorylated at Tyr-619 following endoplasmic reticulum stress, leading to activate its activity (PubMed:22169477). Dephosphorylated at Tyr-619 by PTPN1/PTP1B, leading to inactivate its enzyme activity (PubMed:22169477). Phosphorylation at Thr-802 by AKT (AKT1, AKT2 and/or AKT3) inactivates EIF2AK3/PERK (By similarity).</text>
</comment>
<comment type="PTM">
    <text evidence="16">ADP-ribosylated by PARP16 upon ER stress, which increases kinase activity.</text>
</comment>
<comment type="disease" evidence="8 10 11 13 17 18 22 24 25 26 29 31">
    <disease id="DI-01149">
        <name>Wolcott-Rallison syndrome</name>
        <acronym>WRS</acronym>
        <description>A rare autosomal recessive disorder, characterized by permanent neonatal or early infancy insulin-dependent diabetes and, at a later age, epiphyseal dysplasia, osteoporosis, growth retardation and other multisystem manifestations, such as hepatic and renal dysfunctions, intellectual disability and cardiovascular abnormalities.</description>
        <dbReference type="MIM" id="226980"/>
    </disease>
    <text>The disease is caused by variants affecting the gene represented in this entry.</text>
</comment>
<comment type="similarity">
    <text evidence="3">Belongs to the protein kinase superfamily. Ser/Thr protein kinase family. GCN2 subfamily.</text>
</comment>
<dbReference type="EC" id="2.7.11.1" evidence="6 7"/>
<dbReference type="EC" id="2.7.10.2" evidence="1"/>
<dbReference type="EMBL" id="AF110146">
    <property type="protein sequence ID" value="AAD19961.1"/>
    <property type="molecule type" value="mRNA"/>
</dbReference>
<dbReference type="EMBL" id="AF193339">
    <property type="protein sequence ID" value="AAF61199.1"/>
    <property type="molecule type" value="mRNA"/>
</dbReference>
<dbReference type="EMBL" id="AF284615">
    <property type="protein sequence ID" value="AAF91480.1"/>
    <property type="molecule type" value="Genomic_DNA"/>
</dbReference>
<dbReference type="EMBL" id="AF284604">
    <property type="protein sequence ID" value="AAF91480.1"/>
    <property type="status" value="JOINED"/>
    <property type="molecule type" value="Genomic_DNA"/>
</dbReference>
<dbReference type="EMBL" id="AF284605">
    <property type="protein sequence ID" value="AAF91480.1"/>
    <property type="status" value="JOINED"/>
    <property type="molecule type" value="Genomic_DNA"/>
</dbReference>
<dbReference type="EMBL" id="AF284606">
    <property type="protein sequence ID" value="AAF91480.1"/>
    <property type="status" value="JOINED"/>
    <property type="molecule type" value="Genomic_DNA"/>
</dbReference>
<dbReference type="EMBL" id="AF284607">
    <property type="protein sequence ID" value="AAF91480.1"/>
    <property type="status" value="JOINED"/>
    <property type="molecule type" value="Genomic_DNA"/>
</dbReference>
<dbReference type="EMBL" id="AF284608">
    <property type="protein sequence ID" value="AAF91480.1"/>
    <property type="status" value="JOINED"/>
    <property type="molecule type" value="Genomic_DNA"/>
</dbReference>
<dbReference type="EMBL" id="AF284609">
    <property type="protein sequence ID" value="AAF91480.1"/>
    <property type="status" value="JOINED"/>
    <property type="molecule type" value="Genomic_DNA"/>
</dbReference>
<dbReference type="EMBL" id="AF284610">
    <property type="protein sequence ID" value="AAF91480.1"/>
    <property type="status" value="JOINED"/>
    <property type="molecule type" value="Genomic_DNA"/>
</dbReference>
<dbReference type="EMBL" id="AF284611">
    <property type="protein sequence ID" value="AAF91480.1"/>
    <property type="status" value="JOINED"/>
    <property type="molecule type" value="Genomic_DNA"/>
</dbReference>
<dbReference type="EMBL" id="AF284612">
    <property type="protein sequence ID" value="AAF91480.1"/>
    <property type="status" value="JOINED"/>
    <property type="molecule type" value="Genomic_DNA"/>
</dbReference>
<dbReference type="EMBL" id="AF284613">
    <property type="protein sequence ID" value="AAF91480.1"/>
    <property type="status" value="JOINED"/>
    <property type="molecule type" value="Genomic_DNA"/>
</dbReference>
<dbReference type="EMBL" id="AF284614">
    <property type="protein sequence ID" value="AAF91480.1"/>
    <property type="status" value="JOINED"/>
    <property type="molecule type" value="Genomic_DNA"/>
</dbReference>
<dbReference type="EMBL" id="AK315287">
    <property type="protein sequence ID" value="BAG37696.1"/>
    <property type="molecule type" value="mRNA"/>
</dbReference>
<dbReference type="EMBL" id="AC062029">
    <property type="protein sequence ID" value="AAY14777.1"/>
    <property type="molecule type" value="Genomic_DNA"/>
</dbReference>
<dbReference type="EMBL" id="AC104134">
    <property type="protein sequence ID" value="AAY24331.1"/>
    <property type="molecule type" value="Genomic_DNA"/>
</dbReference>
<dbReference type="EMBL" id="BC126354">
    <property type="protein sequence ID" value="AAI26355.1"/>
    <property type="molecule type" value="mRNA"/>
</dbReference>
<dbReference type="EMBL" id="BC126356">
    <property type="protein sequence ID" value="AAI26357.1"/>
    <property type="molecule type" value="mRNA"/>
</dbReference>
<dbReference type="CCDS" id="CCDS33241.1"/>
<dbReference type="RefSeq" id="NP_004827.4">
    <property type="nucleotide sequence ID" value="NM_004836.6"/>
</dbReference>
<dbReference type="PDB" id="4G31">
    <property type="method" value="X-ray"/>
    <property type="resolution" value="2.28 A"/>
    <property type="chains" value="A=588-1093"/>
</dbReference>
<dbReference type="PDB" id="4G34">
    <property type="method" value="X-ray"/>
    <property type="resolution" value="2.70 A"/>
    <property type="chains" value="A=588-1093"/>
</dbReference>
<dbReference type="PDB" id="4M7I">
    <property type="method" value="X-ray"/>
    <property type="resolution" value="2.34 A"/>
    <property type="chains" value="A=588-1093"/>
</dbReference>
<dbReference type="PDB" id="4X7H">
    <property type="method" value="X-ray"/>
    <property type="resolution" value="2.00 A"/>
    <property type="chains" value="A=575-1094"/>
</dbReference>
<dbReference type="PDB" id="4X7J">
    <property type="method" value="X-ray"/>
    <property type="resolution" value="2.30 A"/>
    <property type="chains" value="A=575-1094"/>
</dbReference>
<dbReference type="PDB" id="4X7K">
    <property type="method" value="X-ray"/>
    <property type="resolution" value="1.80 A"/>
    <property type="chains" value="A=575-1094"/>
</dbReference>
<dbReference type="PDB" id="4X7L">
    <property type="method" value="X-ray"/>
    <property type="resolution" value="1.90 A"/>
    <property type="chains" value="A=575-1094"/>
</dbReference>
<dbReference type="PDB" id="4X7N">
    <property type="method" value="X-ray"/>
    <property type="resolution" value="2.35 A"/>
    <property type="chains" value="A=575-1094"/>
</dbReference>
<dbReference type="PDB" id="4X7O">
    <property type="method" value="X-ray"/>
    <property type="resolution" value="2.65 A"/>
    <property type="chains" value="A=575-1094"/>
</dbReference>
<dbReference type="PDB" id="4YZS">
    <property type="method" value="X-ray"/>
    <property type="resolution" value="3.14 A"/>
    <property type="chains" value="A/B=104-403"/>
</dbReference>
<dbReference type="PDB" id="5SV7">
    <property type="method" value="X-ray"/>
    <property type="resolution" value="3.21 A"/>
    <property type="chains" value="A/B/C/D=95-420"/>
</dbReference>
<dbReference type="PDB" id="7MF0">
    <property type="method" value="X-ray"/>
    <property type="resolution" value="2.81 A"/>
    <property type="chains" value="AAA=575-1094"/>
</dbReference>
<dbReference type="PDB" id="8EQ9">
    <property type="method" value="X-ray"/>
    <property type="resolution" value="2.86 A"/>
    <property type="chains" value="AAA=575-1094"/>
</dbReference>
<dbReference type="PDB" id="8EQD">
    <property type="method" value="X-ray"/>
    <property type="resolution" value="2.92 A"/>
    <property type="chains" value="AAA=575-1094"/>
</dbReference>
<dbReference type="PDB" id="8EQE">
    <property type="method" value="X-ray"/>
    <property type="resolution" value="2.56 A"/>
    <property type="chains" value="AAA=575-1094"/>
</dbReference>
<dbReference type="PDBsum" id="4G31"/>
<dbReference type="PDBsum" id="4G34"/>
<dbReference type="PDBsum" id="4M7I"/>
<dbReference type="PDBsum" id="4X7H"/>
<dbReference type="PDBsum" id="4X7J"/>
<dbReference type="PDBsum" id="4X7K"/>
<dbReference type="PDBsum" id="4X7L"/>
<dbReference type="PDBsum" id="4X7N"/>
<dbReference type="PDBsum" id="4X7O"/>
<dbReference type="PDBsum" id="4YZS"/>
<dbReference type="PDBsum" id="5SV7"/>
<dbReference type="PDBsum" id="7MF0"/>
<dbReference type="PDBsum" id="8EQ9"/>
<dbReference type="PDBsum" id="8EQD"/>
<dbReference type="PDBsum" id="8EQE"/>
<dbReference type="SMR" id="Q9NZJ5"/>
<dbReference type="BioGRID" id="114840">
    <property type="interactions" value="172"/>
</dbReference>
<dbReference type="FunCoup" id="Q9NZJ5">
    <property type="interactions" value="3168"/>
</dbReference>
<dbReference type="IntAct" id="Q9NZJ5">
    <property type="interactions" value="71"/>
</dbReference>
<dbReference type="MINT" id="Q9NZJ5"/>
<dbReference type="STRING" id="9606.ENSP00000307235"/>
<dbReference type="BindingDB" id="Q9NZJ5"/>
<dbReference type="ChEMBL" id="CHEMBL6030"/>
<dbReference type="GuidetoPHARMACOLOGY" id="2017"/>
<dbReference type="TCDB" id="8.A.23.1.57">
    <property type="family name" value="the basigin (basigin) family"/>
</dbReference>
<dbReference type="GlyCosmos" id="Q9NZJ5">
    <property type="glycosylation" value="1 site, No reported glycans"/>
</dbReference>
<dbReference type="GlyGen" id="Q9NZJ5">
    <property type="glycosylation" value="6 sites, 1 N-linked glycan (1 site), 2 O-linked glycans (4 sites)"/>
</dbReference>
<dbReference type="iPTMnet" id="Q9NZJ5"/>
<dbReference type="PhosphoSitePlus" id="Q9NZJ5"/>
<dbReference type="SwissPalm" id="Q9NZJ5"/>
<dbReference type="BioMuta" id="EIF2AK3"/>
<dbReference type="DMDM" id="296439367"/>
<dbReference type="jPOST" id="Q9NZJ5"/>
<dbReference type="MassIVE" id="Q9NZJ5"/>
<dbReference type="PaxDb" id="9606-ENSP00000307235"/>
<dbReference type="PeptideAtlas" id="Q9NZJ5"/>
<dbReference type="ProteomicsDB" id="83416"/>
<dbReference type="Pumba" id="Q9NZJ5"/>
<dbReference type="Antibodypedia" id="2635">
    <property type="antibodies" value="650 antibodies from 39 providers"/>
</dbReference>
<dbReference type="DNASU" id="9451"/>
<dbReference type="Ensembl" id="ENST00000303236.9">
    <property type="protein sequence ID" value="ENSP00000307235.3"/>
    <property type="gene ID" value="ENSG00000172071.15"/>
</dbReference>
<dbReference type="GeneID" id="9451"/>
<dbReference type="KEGG" id="hsa:9451"/>
<dbReference type="MANE-Select" id="ENST00000303236.9">
    <property type="protein sequence ID" value="ENSP00000307235.3"/>
    <property type="RefSeq nucleotide sequence ID" value="NM_004836.7"/>
    <property type="RefSeq protein sequence ID" value="NP_004827.4"/>
</dbReference>
<dbReference type="UCSC" id="uc002stc.5">
    <property type="organism name" value="human"/>
</dbReference>
<dbReference type="AGR" id="HGNC:3255"/>
<dbReference type="CTD" id="9451"/>
<dbReference type="DisGeNET" id="9451"/>
<dbReference type="GeneCards" id="EIF2AK3"/>
<dbReference type="GeneReviews" id="EIF2AK3"/>
<dbReference type="HGNC" id="HGNC:3255">
    <property type="gene designation" value="EIF2AK3"/>
</dbReference>
<dbReference type="HPA" id="ENSG00000172071">
    <property type="expression patterns" value="Tissue enhanced (pancreas)"/>
</dbReference>
<dbReference type="MalaCards" id="EIF2AK3"/>
<dbReference type="MIM" id="226980">
    <property type="type" value="phenotype"/>
</dbReference>
<dbReference type="MIM" id="604032">
    <property type="type" value="gene"/>
</dbReference>
<dbReference type="neXtProt" id="NX_Q9NZJ5"/>
<dbReference type="OpenTargets" id="ENSG00000172071"/>
<dbReference type="Orphanet" id="1667">
    <property type="disease" value="Wolcott-Rallison syndrome"/>
</dbReference>
<dbReference type="PharmGKB" id="PA27687"/>
<dbReference type="VEuPathDB" id="HostDB:ENSG00000172071"/>
<dbReference type="eggNOG" id="KOG1033">
    <property type="taxonomic scope" value="Eukaryota"/>
</dbReference>
<dbReference type="GeneTree" id="ENSGT00940000158121"/>
<dbReference type="InParanoid" id="Q9NZJ5"/>
<dbReference type="OMA" id="CMIEERE"/>
<dbReference type="OrthoDB" id="341578at2759"/>
<dbReference type="PAN-GO" id="Q9NZJ5">
    <property type="GO annotations" value="2 GO annotations based on evolutionary models"/>
</dbReference>
<dbReference type="PhylomeDB" id="Q9NZJ5"/>
<dbReference type="TreeFam" id="TF101511"/>
<dbReference type="BRENDA" id="2.7.11.1">
    <property type="organism ID" value="2681"/>
</dbReference>
<dbReference type="PathwayCommons" id="Q9NZJ5"/>
<dbReference type="Reactome" id="R-HSA-381042">
    <property type="pathway name" value="PERK regulates gene expression"/>
</dbReference>
<dbReference type="Reactome" id="R-HSA-9700645">
    <property type="pathway name" value="ALK mutants bind TKIs"/>
</dbReference>
<dbReference type="Reactome" id="R-HSA-9725370">
    <property type="pathway name" value="Signaling by ALK fusions and activated point mutants"/>
</dbReference>
<dbReference type="Reactome" id="R-HSA-9755511">
    <property type="pathway name" value="KEAP1-NFE2L2 pathway"/>
</dbReference>
<dbReference type="Reactome" id="R-HSA-9909505">
    <property type="pathway name" value="Modulation of host responses by IFN-stimulated genes"/>
</dbReference>
<dbReference type="SignaLink" id="Q9NZJ5"/>
<dbReference type="SIGNOR" id="Q9NZJ5"/>
<dbReference type="BioGRID-ORCS" id="9451">
    <property type="hits" value="22 hits in 1192 CRISPR screens"/>
</dbReference>
<dbReference type="CD-CODE" id="DEE660B4">
    <property type="entry name" value="Stress granule"/>
</dbReference>
<dbReference type="ChiTaRS" id="EIF2AK3">
    <property type="organism name" value="human"/>
</dbReference>
<dbReference type="EvolutionaryTrace" id="Q9NZJ5"/>
<dbReference type="GeneWiki" id="EIF2AK3"/>
<dbReference type="GenomeRNAi" id="9451"/>
<dbReference type="Pharos" id="Q9NZJ5">
    <property type="development level" value="Tchem"/>
</dbReference>
<dbReference type="PRO" id="PR:Q9NZJ5"/>
<dbReference type="Proteomes" id="UP000005640">
    <property type="component" value="Chromosome 2"/>
</dbReference>
<dbReference type="RNAct" id="Q9NZJ5">
    <property type="molecule type" value="protein"/>
</dbReference>
<dbReference type="Bgee" id="ENSG00000172071">
    <property type="expression patterns" value="Expressed in body of pancreas and 199 other cell types or tissues"/>
</dbReference>
<dbReference type="ExpressionAtlas" id="Q9NZJ5">
    <property type="expression patterns" value="baseline and differential"/>
</dbReference>
<dbReference type="GO" id="GO:0005737">
    <property type="term" value="C:cytoplasm"/>
    <property type="evidence" value="ECO:0000250"/>
    <property type="project" value="UniProtKB"/>
</dbReference>
<dbReference type="GO" id="GO:0005829">
    <property type="term" value="C:cytosol"/>
    <property type="evidence" value="ECO:0000304"/>
    <property type="project" value="Reactome"/>
</dbReference>
<dbReference type="GO" id="GO:0005783">
    <property type="term" value="C:endoplasmic reticulum"/>
    <property type="evidence" value="ECO:0000250"/>
    <property type="project" value="UniProtKB"/>
</dbReference>
<dbReference type="GO" id="GO:0005789">
    <property type="term" value="C:endoplasmic reticulum membrane"/>
    <property type="evidence" value="ECO:0000250"/>
    <property type="project" value="UniProtKB"/>
</dbReference>
<dbReference type="GO" id="GO:0016020">
    <property type="term" value="C:membrane"/>
    <property type="evidence" value="ECO:0007005"/>
    <property type="project" value="UniProtKB"/>
</dbReference>
<dbReference type="GO" id="GO:0044233">
    <property type="term" value="C:mitochondria-associated endoplasmic reticulum membrane contact site"/>
    <property type="evidence" value="ECO:0000314"/>
    <property type="project" value="UniProtKB"/>
</dbReference>
<dbReference type="GO" id="GO:0005634">
    <property type="term" value="C:nucleus"/>
    <property type="evidence" value="ECO:0000318"/>
    <property type="project" value="GO_Central"/>
</dbReference>
<dbReference type="GO" id="GO:0048471">
    <property type="term" value="C:perinuclear region of cytoplasm"/>
    <property type="evidence" value="ECO:0007669"/>
    <property type="project" value="Ensembl"/>
</dbReference>
<dbReference type="GO" id="GO:0005524">
    <property type="term" value="F:ATP binding"/>
    <property type="evidence" value="ECO:0007669"/>
    <property type="project" value="UniProtKB-KW"/>
</dbReference>
<dbReference type="GO" id="GO:0019899">
    <property type="term" value="F:enzyme binding"/>
    <property type="evidence" value="ECO:0000353"/>
    <property type="project" value="UniProtKB"/>
</dbReference>
<dbReference type="GO" id="GO:0004694">
    <property type="term" value="F:eukaryotic translation initiation factor 2alpha kinase activity"/>
    <property type="evidence" value="ECO:0000314"/>
    <property type="project" value="UniProtKB"/>
</dbReference>
<dbReference type="GO" id="GO:0051879">
    <property type="term" value="F:Hsp90 protein binding"/>
    <property type="evidence" value="ECO:0007669"/>
    <property type="project" value="Ensembl"/>
</dbReference>
<dbReference type="GO" id="GO:0042802">
    <property type="term" value="F:identical protein binding"/>
    <property type="evidence" value="ECO:0000353"/>
    <property type="project" value="IntAct"/>
</dbReference>
<dbReference type="GO" id="GO:0051787">
    <property type="term" value="F:misfolded protein binding"/>
    <property type="evidence" value="ECO:0000314"/>
    <property type="project" value="UniProtKB"/>
</dbReference>
<dbReference type="GO" id="GO:0004672">
    <property type="term" value="F:protein kinase activity"/>
    <property type="evidence" value="ECO:0000304"/>
    <property type="project" value="ProtInc"/>
</dbReference>
<dbReference type="GO" id="GO:0019903">
    <property type="term" value="F:protein phosphatase binding"/>
    <property type="evidence" value="ECO:0000353"/>
    <property type="project" value="UniProtKB"/>
</dbReference>
<dbReference type="GO" id="GO:0106310">
    <property type="term" value="F:protein serine kinase activity"/>
    <property type="evidence" value="ECO:0007669"/>
    <property type="project" value="RHEA"/>
</dbReference>
<dbReference type="GO" id="GO:0004674">
    <property type="term" value="F:protein serine/threonine kinase activity"/>
    <property type="evidence" value="ECO:0000250"/>
    <property type="project" value="UniProtKB"/>
</dbReference>
<dbReference type="GO" id="GO:0004713">
    <property type="term" value="F:protein tyrosine kinase activity"/>
    <property type="evidence" value="ECO:0000250"/>
    <property type="project" value="UniProtKB"/>
</dbReference>
<dbReference type="GO" id="GO:0045182">
    <property type="term" value="F:translation regulator activity"/>
    <property type="evidence" value="ECO:0000250"/>
    <property type="project" value="ParkinsonsUK-UCL"/>
</dbReference>
<dbReference type="GO" id="GO:0001525">
    <property type="term" value="P:angiogenesis"/>
    <property type="evidence" value="ECO:0000315"/>
    <property type="project" value="ParkinsonsUK-UCL"/>
</dbReference>
<dbReference type="GO" id="GO:0030282">
    <property type="term" value="P:bone mineralization"/>
    <property type="evidence" value="ECO:0000250"/>
    <property type="project" value="UniProtKB"/>
</dbReference>
<dbReference type="GO" id="GO:0019722">
    <property type="term" value="P:calcium-mediated signaling"/>
    <property type="evidence" value="ECO:0000250"/>
    <property type="project" value="UniProtKB"/>
</dbReference>
<dbReference type="GO" id="GO:0034198">
    <property type="term" value="P:cellular response to amino acid starvation"/>
    <property type="evidence" value="ECO:0000315"/>
    <property type="project" value="UniProtKB"/>
</dbReference>
<dbReference type="GO" id="GO:0070417">
    <property type="term" value="P:cellular response to cold"/>
    <property type="evidence" value="ECO:0000315"/>
    <property type="project" value="UniProtKB"/>
</dbReference>
<dbReference type="GO" id="GO:0042149">
    <property type="term" value="P:cellular response to glucose starvation"/>
    <property type="evidence" value="ECO:0000315"/>
    <property type="project" value="ParkinsonsUK-UCL"/>
</dbReference>
<dbReference type="GO" id="GO:0002063">
    <property type="term" value="P:chondrocyte development"/>
    <property type="evidence" value="ECO:0000250"/>
    <property type="project" value="UniProtKB"/>
</dbReference>
<dbReference type="GO" id="GO:0031018">
    <property type="term" value="P:endocrine pancreas development"/>
    <property type="evidence" value="ECO:0000315"/>
    <property type="project" value="UniProtKB"/>
</dbReference>
<dbReference type="GO" id="GO:0007029">
    <property type="term" value="P:endoplasmic reticulum organization"/>
    <property type="evidence" value="ECO:0000250"/>
    <property type="project" value="UniProtKB"/>
</dbReference>
<dbReference type="GO" id="GO:0030968">
    <property type="term" value="P:endoplasmic reticulum unfolded protein response"/>
    <property type="evidence" value="ECO:0000314"/>
    <property type="project" value="UniProtKB"/>
</dbReference>
<dbReference type="GO" id="GO:0006983">
    <property type="term" value="P:ER overload response"/>
    <property type="evidence" value="ECO:0000314"/>
    <property type="project" value="UniProtKB"/>
</dbReference>
<dbReference type="GO" id="GO:0048009">
    <property type="term" value="P:insulin-like growth factor receptor signaling pathway"/>
    <property type="evidence" value="ECO:0000250"/>
    <property type="project" value="UniProtKB"/>
</dbReference>
<dbReference type="GO" id="GO:0031642">
    <property type="term" value="P:negative regulation of myelination"/>
    <property type="evidence" value="ECO:0000250"/>
    <property type="project" value="UniProtKB"/>
</dbReference>
<dbReference type="GO" id="GO:0017148">
    <property type="term" value="P:negative regulation of translation"/>
    <property type="evidence" value="ECO:0000318"/>
    <property type="project" value="GO_Central"/>
</dbReference>
<dbReference type="GO" id="GO:0032055">
    <property type="term" value="P:negative regulation of translation in response to stress"/>
    <property type="evidence" value="ECO:0007669"/>
    <property type="project" value="Ensembl"/>
</dbReference>
<dbReference type="GO" id="GO:0045947">
    <property type="term" value="P:negative regulation of translational initiation"/>
    <property type="evidence" value="ECO:0000304"/>
    <property type="project" value="BHF-UCL"/>
</dbReference>
<dbReference type="GO" id="GO:0032057">
    <property type="term" value="P:negative regulation of translational initiation in response to stress"/>
    <property type="evidence" value="ECO:0000304"/>
    <property type="project" value="UniProtKB"/>
</dbReference>
<dbReference type="GO" id="GO:0001503">
    <property type="term" value="P:ossification"/>
    <property type="evidence" value="ECO:0000315"/>
    <property type="project" value="UniProtKB"/>
</dbReference>
<dbReference type="GO" id="GO:0036499">
    <property type="term" value="P:PERK-mediated unfolded protein response"/>
    <property type="evidence" value="ECO:0000314"/>
    <property type="project" value="UniProtKB"/>
</dbReference>
<dbReference type="GO" id="GO:0010628">
    <property type="term" value="P:positive regulation of gene expression"/>
    <property type="evidence" value="ECO:0000315"/>
    <property type="project" value="ParkinsonsUK-UCL"/>
</dbReference>
<dbReference type="GO" id="GO:1900182">
    <property type="term" value="P:positive regulation of protein localization to nucleus"/>
    <property type="evidence" value="ECO:0000250"/>
    <property type="project" value="ParkinsonsUK-UCL"/>
</dbReference>
<dbReference type="GO" id="GO:0045943">
    <property type="term" value="P:positive regulation of transcription by RNA polymerase I"/>
    <property type="evidence" value="ECO:0000315"/>
    <property type="project" value="ParkinsonsUK-UCL"/>
</dbReference>
<dbReference type="GO" id="GO:0010575">
    <property type="term" value="P:positive regulation of vascular endothelial growth factor production"/>
    <property type="evidence" value="ECO:0000315"/>
    <property type="project" value="ParkinsonsUK-UCL"/>
</dbReference>
<dbReference type="GO" id="GO:1902235">
    <property type="term" value="P:regulation of endoplasmic reticulum stress-induced intrinsic apoptotic signaling pathway"/>
    <property type="evidence" value="ECO:0000315"/>
    <property type="project" value="ParkinsonsUK-UCL"/>
</dbReference>
<dbReference type="GO" id="GO:0036491">
    <property type="term" value="P:regulation of translation initiation in response to endoplasmic reticulum stress"/>
    <property type="evidence" value="ECO:0000250"/>
    <property type="project" value="ParkinsonsUK-UCL"/>
</dbReference>
<dbReference type="GO" id="GO:0006446">
    <property type="term" value="P:regulation of translational initiation"/>
    <property type="evidence" value="ECO:0000318"/>
    <property type="project" value="GO_Central"/>
</dbReference>
<dbReference type="GO" id="GO:0034976">
    <property type="term" value="P:response to endoplasmic reticulum stress"/>
    <property type="evidence" value="ECO:0000315"/>
    <property type="project" value="BHF-UCL"/>
</dbReference>
<dbReference type="GO" id="GO:1990737">
    <property type="term" value="P:response to manganese-induced endoplasmic reticulum stress"/>
    <property type="evidence" value="ECO:0007669"/>
    <property type="project" value="Ensembl"/>
</dbReference>
<dbReference type="GO" id="GO:0001501">
    <property type="term" value="P:skeletal system development"/>
    <property type="evidence" value="ECO:0000250"/>
    <property type="project" value="UniProtKB"/>
</dbReference>
<dbReference type="CDD" id="cd09768">
    <property type="entry name" value="Luminal_EIF2AK3"/>
    <property type="match status" value="1"/>
</dbReference>
<dbReference type="CDD" id="cd14048">
    <property type="entry name" value="STKc_EIF2AK3_PERK"/>
    <property type="match status" value="1"/>
</dbReference>
<dbReference type="FunFam" id="2.130.10.10:FF:000622">
    <property type="entry name" value="Eukaryotic translation initiation factor 2-alpha kinase 3"/>
    <property type="match status" value="1"/>
</dbReference>
<dbReference type="FunFam" id="3.30.200.20:FF:000193">
    <property type="entry name" value="Eukaryotic translation initiation factor 2-alpha kinase 3"/>
    <property type="match status" value="1"/>
</dbReference>
<dbReference type="FunFam" id="1.10.510.10:FF:000251">
    <property type="entry name" value="eukaryotic translation initiation factor 2-alpha kinase 3"/>
    <property type="match status" value="1"/>
</dbReference>
<dbReference type="Gene3D" id="3.30.200.20">
    <property type="entry name" value="Phosphorylase Kinase, domain 1"/>
    <property type="match status" value="1"/>
</dbReference>
<dbReference type="Gene3D" id="1.10.510.10">
    <property type="entry name" value="Transferase(Phosphotransferase) domain 1"/>
    <property type="match status" value="1"/>
</dbReference>
<dbReference type="Gene3D" id="2.130.10.10">
    <property type="entry name" value="YVTN repeat-like/Quinoprotein amine dehydrogenase"/>
    <property type="match status" value="1"/>
</dbReference>
<dbReference type="InterPro" id="IPR050339">
    <property type="entry name" value="CC_SR_Kinase"/>
</dbReference>
<dbReference type="InterPro" id="IPR011009">
    <property type="entry name" value="Kinase-like_dom_sf"/>
</dbReference>
<dbReference type="InterPro" id="IPR000719">
    <property type="entry name" value="Prot_kinase_dom"/>
</dbReference>
<dbReference type="InterPro" id="IPR017441">
    <property type="entry name" value="Protein_kinase_ATP_BS"/>
</dbReference>
<dbReference type="InterPro" id="IPR011047">
    <property type="entry name" value="Quinoprotein_ADH-like_sf"/>
</dbReference>
<dbReference type="InterPro" id="IPR008271">
    <property type="entry name" value="Ser/Thr_kinase_AS"/>
</dbReference>
<dbReference type="InterPro" id="IPR015943">
    <property type="entry name" value="WD40/YVTN_repeat-like_dom_sf"/>
</dbReference>
<dbReference type="PANTHER" id="PTHR11042:SF166">
    <property type="entry name" value="EUKARYOTIC TRANSLATION INITIATION FACTOR 2-ALPHA KINASE 3"/>
    <property type="match status" value="1"/>
</dbReference>
<dbReference type="PANTHER" id="PTHR11042">
    <property type="entry name" value="EUKARYOTIC TRANSLATION INITIATION FACTOR 2-ALPHA KINASE EIF2-ALPHA KINASE -RELATED"/>
    <property type="match status" value="1"/>
</dbReference>
<dbReference type="Pfam" id="PF00069">
    <property type="entry name" value="Pkinase"/>
    <property type="match status" value="2"/>
</dbReference>
<dbReference type="SMART" id="SM00220">
    <property type="entry name" value="S_TKc"/>
    <property type="match status" value="1"/>
</dbReference>
<dbReference type="SUPFAM" id="SSF56112">
    <property type="entry name" value="Protein kinase-like (PK-like)"/>
    <property type="match status" value="1"/>
</dbReference>
<dbReference type="SUPFAM" id="SSF50998">
    <property type="entry name" value="Quinoprotein alcohol dehydrogenase-like"/>
    <property type="match status" value="1"/>
</dbReference>
<dbReference type="PROSITE" id="PS00107">
    <property type="entry name" value="PROTEIN_KINASE_ATP"/>
    <property type="match status" value="1"/>
</dbReference>
<dbReference type="PROSITE" id="PS50011">
    <property type="entry name" value="PROTEIN_KINASE_DOM"/>
    <property type="match status" value="1"/>
</dbReference>
<dbReference type="PROSITE" id="PS00108">
    <property type="entry name" value="PROTEIN_KINASE_ST"/>
    <property type="match status" value="1"/>
</dbReference>
<accession>Q9NZJ5</accession>
<accession>A0AVH1</accession>
<accession>A0AVH2</accession>
<accession>B2RCU9</accession>
<accession>O95846</accession>
<accession>Q53QY0</accession>
<accession>Q53SB1</accession>
<protein>
    <recommendedName>
        <fullName evidence="36">Eukaryotic translation initiation factor 2-alpha kinase 3</fullName>
        <ecNumber evidence="6 7">2.7.11.1</ecNumber>
    </recommendedName>
    <alternativeName>
        <fullName evidence="35">PRKR-like endoplasmic reticulum kinase</fullName>
    </alternativeName>
    <alternativeName>
        <fullName evidence="33">Pancreatic eIF2-alpha kinase</fullName>
        <shortName evidence="33">HsPEK</shortName>
    </alternativeName>
    <alternativeName>
        <fullName evidence="36">Protein tyrosine kinase EIF2AK3</fullName>
        <ecNumber evidence="1">2.7.10.2</ecNumber>
    </alternativeName>
</protein>
<keyword id="KW-0002">3D-structure</keyword>
<keyword id="KW-0013">ADP-ribosylation</keyword>
<keyword id="KW-0067">ATP-binding</keyword>
<keyword id="KW-0219">Diabetes mellitus</keyword>
<keyword id="KW-0225">Disease variant</keyword>
<keyword id="KW-0256">Endoplasmic reticulum</keyword>
<keyword id="KW-0325">Glycoprotein</keyword>
<keyword id="KW-0418">Kinase</keyword>
<keyword id="KW-0472">Membrane</keyword>
<keyword id="KW-0547">Nucleotide-binding</keyword>
<keyword id="KW-0597">Phosphoprotein</keyword>
<keyword id="KW-1267">Proteomics identification</keyword>
<keyword id="KW-1185">Reference proteome</keyword>
<keyword id="KW-0723">Serine/threonine-protein kinase</keyword>
<keyword id="KW-0732">Signal</keyword>
<keyword id="KW-0346">Stress response</keyword>
<keyword id="KW-0808">Transferase</keyword>
<keyword id="KW-0810">Translation regulation</keyword>
<keyword id="KW-0812">Transmembrane</keyword>
<keyword id="KW-1133">Transmembrane helix</keyword>
<keyword id="KW-0829">Tyrosine-protein kinase</keyword>
<keyword id="KW-0834">Unfolded protein response</keyword>
<name>E2AK3_HUMAN</name>
<organism>
    <name type="scientific">Homo sapiens</name>
    <name type="common">Human</name>
    <dbReference type="NCBI Taxonomy" id="9606"/>
    <lineage>
        <taxon>Eukaryota</taxon>
        <taxon>Metazoa</taxon>
        <taxon>Chordata</taxon>
        <taxon>Craniata</taxon>
        <taxon>Vertebrata</taxon>
        <taxon>Euteleostomi</taxon>
        <taxon>Mammalia</taxon>
        <taxon>Eutheria</taxon>
        <taxon>Euarchontoglires</taxon>
        <taxon>Primates</taxon>
        <taxon>Haplorrhini</taxon>
        <taxon>Catarrhini</taxon>
        <taxon>Hominidae</taxon>
        <taxon>Homo</taxon>
    </lineage>
</organism>
<proteinExistence type="evidence at protein level"/>
<reference key="1">
    <citation type="journal article" date="1999" name="J. Biol. Chem.">
        <title>Characterization of a mutant pancreatic eIF-2alpha kinase, PEK, and co-localization with somatostatin in islet delta cells.</title>
        <authorList>
            <person name="Shi Y."/>
            <person name="An J."/>
            <person name="Liang J."/>
            <person name="Hayes S.E."/>
            <person name="Sandusky G.E."/>
            <person name="Stramm L.E."/>
            <person name="Yang N.N."/>
        </authorList>
    </citation>
    <scope>NUCLEOTIDE SEQUENCE [MRNA]</scope>
    <scope>FUNCTION</scope>
    <scope>CATALYTIC ACTIVITY</scope>
    <scope>TISSUE SPECIFICITY</scope>
    <scope>VARIANTS ARG-166 AND SER-704</scope>
    <source>
        <tissue>Liver</tissue>
        <tissue>Pancreas</tissue>
        <tissue>Testis</tissue>
    </source>
</reference>
<reference key="2">
    <citation type="journal article" date="2000" name="Biochem. J.">
        <title>Pancreatic eukaryotic initiation factor-2alpha kinase (PEK) homologues in humans, Drosophila melanogaster and Caenorhabditis elegans that mediate translational control in response to endoplasmic reticulum stress.</title>
        <authorList>
            <person name="Sood R."/>
            <person name="Porter A.C."/>
            <person name="Ma K."/>
            <person name="Quilliam L.A."/>
            <person name="Wek R.C."/>
        </authorList>
    </citation>
    <scope>NUCLEOTIDE SEQUENCE [MRNA]</scope>
    <scope>FUNCTION</scope>
    <scope>CATALYTIC ACTIVITY</scope>
    <scope>INDUCTION</scope>
    <scope>VARIANTS ARG-166 AND SER-704</scope>
    <source>
        <tissue>Brain</tissue>
        <tissue>Pancreas</tissue>
    </source>
</reference>
<reference key="3">
    <citation type="journal article" date="2000" name="Nat. Genet.">
        <title>EIF2AK3, encoding translation initiation factor 2-alpha kinase 3, is mutated in patients with Wolcott-Rallison syndrome.</title>
        <authorList>
            <person name="Delepine M."/>
            <person name="Nicolino M."/>
            <person name="Barrett T."/>
            <person name="Golamaully M."/>
            <person name="Lathrop G.M."/>
            <person name="Julier C."/>
        </authorList>
    </citation>
    <scope>NUCLEOTIDE SEQUENCE [GENOMIC DNA]</scope>
    <scope>VARIANT WRS GLN-588</scope>
    <scope>VARIANT CYS-136</scope>
</reference>
<reference key="4">
    <citation type="journal article" date="2004" name="Nat. Genet.">
        <title>Complete sequencing and characterization of 21,243 full-length human cDNAs.</title>
        <authorList>
            <person name="Ota T."/>
            <person name="Suzuki Y."/>
            <person name="Nishikawa T."/>
            <person name="Otsuki T."/>
            <person name="Sugiyama T."/>
            <person name="Irie R."/>
            <person name="Wakamatsu A."/>
            <person name="Hayashi K."/>
            <person name="Sato H."/>
            <person name="Nagai K."/>
            <person name="Kimura K."/>
            <person name="Makita H."/>
            <person name="Sekine M."/>
            <person name="Obayashi M."/>
            <person name="Nishi T."/>
            <person name="Shibahara T."/>
            <person name="Tanaka T."/>
            <person name="Ishii S."/>
            <person name="Yamamoto J."/>
            <person name="Saito K."/>
            <person name="Kawai Y."/>
            <person name="Isono Y."/>
            <person name="Nakamura Y."/>
            <person name="Nagahari K."/>
            <person name="Murakami K."/>
            <person name="Yasuda T."/>
            <person name="Iwayanagi T."/>
            <person name="Wagatsuma M."/>
            <person name="Shiratori A."/>
            <person name="Sudo H."/>
            <person name="Hosoiri T."/>
            <person name="Kaku Y."/>
            <person name="Kodaira H."/>
            <person name="Kondo H."/>
            <person name="Sugawara M."/>
            <person name="Takahashi M."/>
            <person name="Kanda K."/>
            <person name="Yokoi T."/>
            <person name="Furuya T."/>
            <person name="Kikkawa E."/>
            <person name="Omura Y."/>
            <person name="Abe K."/>
            <person name="Kamihara K."/>
            <person name="Katsuta N."/>
            <person name="Sato K."/>
            <person name="Tanikawa M."/>
            <person name="Yamazaki M."/>
            <person name="Ninomiya K."/>
            <person name="Ishibashi T."/>
            <person name="Yamashita H."/>
            <person name="Murakawa K."/>
            <person name="Fujimori K."/>
            <person name="Tanai H."/>
            <person name="Kimata M."/>
            <person name="Watanabe M."/>
            <person name="Hiraoka S."/>
            <person name="Chiba Y."/>
            <person name="Ishida S."/>
            <person name="Ono Y."/>
            <person name="Takiguchi S."/>
            <person name="Watanabe S."/>
            <person name="Yosida M."/>
            <person name="Hotuta T."/>
            <person name="Kusano J."/>
            <person name="Kanehori K."/>
            <person name="Takahashi-Fujii A."/>
            <person name="Hara H."/>
            <person name="Tanase T.-O."/>
            <person name="Nomura Y."/>
            <person name="Togiya S."/>
            <person name="Komai F."/>
            <person name="Hara R."/>
            <person name="Takeuchi K."/>
            <person name="Arita M."/>
            <person name="Imose N."/>
            <person name="Musashino K."/>
            <person name="Yuuki H."/>
            <person name="Oshima A."/>
            <person name="Sasaki N."/>
            <person name="Aotsuka S."/>
            <person name="Yoshikawa Y."/>
            <person name="Matsunawa H."/>
            <person name="Ichihara T."/>
            <person name="Shiohata N."/>
            <person name="Sano S."/>
            <person name="Moriya S."/>
            <person name="Momiyama H."/>
            <person name="Satoh N."/>
            <person name="Takami S."/>
            <person name="Terashima Y."/>
            <person name="Suzuki O."/>
            <person name="Nakagawa S."/>
            <person name="Senoh A."/>
            <person name="Mizoguchi H."/>
            <person name="Goto Y."/>
            <person name="Shimizu F."/>
            <person name="Wakebe H."/>
            <person name="Hishigaki H."/>
            <person name="Watanabe T."/>
            <person name="Sugiyama A."/>
            <person name="Takemoto M."/>
            <person name="Kawakami B."/>
            <person name="Yamazaki M."/>
            <person name="Watanabe K."/>
            <person name="Kumagai A."/>
            <person name="Itakura S."/>
            <person name="Fukuzumi Y."/>
            <person name="Fujimori Y."/>
            <person name="Komiyama M."/>
            <person name="Tashiro H."/>
            <person name="Tanigami A."/>
            <person name="Fujiwara T."/>
            <person name="Ono T."/>
            <person name="Yamada K."/>
            <person name="Fujii Y."/>
            <person name="Ozaki K."/>
            <person name="Hirao M."/>
            <person name="Ohmori Y."/>
            <person name="Kawabata A."/>
            <person name="Hikiji T."/>
            <person name="Kobatake N."/>
            <person name="Inagaki H."/>
            <person name="Ikema Y."/>
            <person name="Okamoto S."/>
            <person name="Okitani R."/>
            <person name="Kawakami T."/>
            <person name="Noguchi S."/>
            <person name="Itoh T."/>
            <person name="Shigeta K."/>
            <person name="Senba T."/>
            <person name="Matsumura K."/>
            <person name="Nakajima Y."/>
            <person name="Mizuno T."/>
            <person name="Morinaga M."/>
            <person name="Sasaki M."/>
            <person name="Togashi T."/>
            <person name="Oyama M."/>
            <person name="Hata H."/>
            <person name="Watanabe M."/>
            <person name="Komatsu T."/>
            <person name="Mizushima-Sugano J."/>
            <person name="Satoh T."/>
            <person name="Shirai Y."/>
            <person name="Takahashi Y."/>
            <person name="Nakagawa K."/>
            <person name="Okumura K."/>
            <person name="Nagase T."/>
            <person name="Nomura N."/>
            <person name="Kikuchi H."/>
            <person name="Masuho Y."/>
            <person name="Yamashita R."/>
            <person name="Nakai K."/>
            <person name="Yada T."/>
            <person name="Nakamura Y."/>
            <person name="Ohara O."/>
            <person name="Isogai T."/>
            <person name="Sugano S."/>
        </authorList>
    </citation>
    <scope>NUCLEOTIDE SEQUENCE [LARGE SCALE MRNA]</scope>
    <source>
        <tissue>Brain</tissue>
    </source>
</reference>
<reference key="5">
    <citation type="journal article" date="2005" name="Nature">
        <title>Generation and annotation of the DNA sequences of human chromosomes 2 and 4.</title>
        <authorList>
            <person name="Hillier L.W."/>
            <person name="Graves T.A."/>
            <person name="Fulton R.S."/>
            <person name="Fulton L.A."/>
            <person name="Pepin K.H."/>
            <person name="Minx P."/>
            <person name="Wagner-McPherson C."/>
            <person name="Layman D."/>
            <person name="Wylie K."/>
            <person name="Sekhon M."/>
            <person name="Becker M.C."/>
            <person name="Fewell G.A."/>
            <person name="Delehaunty K.D."/>
            <person name="Miner T.L."/>
            <person name="Nash W.E."/>
            <person name="Kremitzki C."/>
            <person name="Oddy L."/>
            <person name="Du H."/>
            <person name="Sun H."/>
            <person name="Bradshaw-Cordum H."/>
            <person name="Ali J."/>
            <person name="Carter J."/>
            <person name="Cordes M."/>
            <person name="Harris A."/>
            <person name="Isak A."/>
            <person name="van Brunt A."/>
            <person name="Nguyen C."/>
            <person name="Du F."/>
            <person name="Courtney L."/>
            <person name="Kalicki J."/>
            <person name="Ozersky P."/>
            <person name="Abbott S."/>
            <person name="Armstrong J."/>
            <person name="Belter E.A."/>
            <person name="Caruso L."/>
            <person name="Cedroni M."/>
            <person name="Cotton M."/>
            <person name="Davidson T."/>
            <person name="Desai A."/>
            <person name="Elliott G."/>
            <person name="Erb T."/>
            <person name="Fronick C."/>
            <person name="Gaige T."/>
            <person name="Haakenson W."/>
            <person name="Haglund K."/>
            <person name="Holmes A."/>
            <person name="Harkins R."/>
            <person name="Kim K."/>
            <person name="Kruchowski S.S."/>
            <person name="Strong C.M."/>
            <person name="Grewal N."/>
            <person name="Goyea E."/>
            <person name="Hou S."/>
            <person name="Levy A."/>
            <person name="Martinka S."/>
            <person name="Mead K."/>
            <person name="McLellan M.D."/>
            <person name="Meyer R."/>
            <person name="Randall-Maher J."/>
            <person name="Tomlinson C."/>
            <person name="Dauphin-Kohlberg S."/>
            <person name="Kozlowicz-Reilly A."/>
            <person name="Shah N."/>
            <person name="Swearengen-Shahid S."/>
            <person name="Snider J."/>
            <person name="Strong J.T."/>
            <person name="Thompson J."/>
            <person name="Yoakum M."/>
            <person name="Leonard S."/>
            <person name="Pearman C."/>
            <person name="Trani L."/>
            <person name="Radionenko M."/>
            <person name="Waligorski J.E."/>
            <person name="Wang C."/>
            <person name="Rock S.M."/>
            <person name="Tin-Wollam A.-M."/>
            <person name="Maupin R."/>
            <person name="Latreille P."/>
            <person name="Wendl M.C."/>
            <person name="Yang S.-P."/>
            <person name="Pohl C."/>
            <person name="Wallis J.W."/>
            <person name="Spieth J."/>
            <person name="Bieri T.A."/>
            <person name="Berkowicz N."/>
            <person name="Nelson J.O."/>
            <person name="Osborne J."/>
            <person name="Ding L."/>
            <person name="Meyer R."/>
            <person name="Sabo A."/>
            <person name="Shotland Y."/>
            <person name="Sinha P."/>
            <person name="Wohldmann P.E."/>
            <person name="Cook L.L."/>
            <person name="Hickenbotham M.T."/>
            <person name="Eldred J."/>
            <person name="Williams D."/>
            <person name="Jones T.A."/>
            <person name="She X."/>
            <person name="Ciccarelli F.D."/>
            <person name="Izaurralde E."/>
            <person name="Taylor J."/>
            <person name="Schmutz J."/>
            <person name="Myers R.M."/>
            <person name="Cox D.R."/>
            <person name="Huang X."/>
            <person name="McPherson J.D."/>
            <person name="Mardis E.R."/>
            <person name="Clifton S.W."/>
            <person name="Warren W.C."/>
            <person name="Chinwalla A.T."/>
            <person name="Eddy S.R."/>
            <person name="Marra M.A."/>
            <person name="Ovcharenko I."/>
            <person name="Furey T.S."/>
            <person name="Miller W."/>
            <person name="Eichler E.E."/>
            <person name="Bork P."/>
            <person name="Suyama M."/>
            <person name="Torrents D."/>
            <person name="Waterston R.H."/>
            <person name="Wilson R.K."/>
        </authorList>
    </citation>
    <scope>NUCLEOTIDE SEQUENCE [LARGE SCALE GENOMIC DNA]</scope>
</reference>
<reference key="6">
    <citation type="journal article" date="2004" name="Genome Res.">
        <title>The status, quality, and expansion of the NIH full-length cDNA project: the Mammalian Gene Collection (MGC).</title>
        <authorList>
            <consortium name="The MGC Project Team"/>
        </authorList>
    </citation>
    <scope>NUCLEOTIDE SEQUENCE [LARGE SCALE MRNA]</scope>
    <scope>VARIANTS ARG-166 AND SER-704</scope>
</reference>
<reference key="7">
    <citation type="journal article" date="2002" name="J. Biol. Chem.">
        <title>Dimerization and release of molecular chaperone inhibition facilitate activation of eukaryotic initiation factor-2 kinase in response to endoplasmic reticulum stress.</title>
        <authorList>
            <person name="Ma K."/>
            <person name="Vattem K.M."/>
            <person name="Wek R.C."/>
        </authorList>
    </citation>
    <scope>FUNCTION</scope>
    <scope>ACTIVITY REGULATION</scope>
    <scope>INTERACTION WITH HSPA5 AND HSP90B1</scope>
</reference>
<reference key="8">
    <citation type="journal article" date="2003" name="J. Med. Genet.">
        <title>Wolcott-Rallison syndrome: pathogenic insights into neonatal diabetes from new mutation and expression studies of EIF2AK3.</title>
        <authorList>
            <person name="Brickwood S."/>
            <person name="Bonthron D.T."/>
            <person name="Al-Gazali L.I."/>
            <person name="Piper K."/>
            <person name="Hearn T."/>
            <person name="Wilson D.I."/>
            <person name="Hanley N.A."/>
        </authorList>
    </citation>
    <scope>INVOLVEMENT IN WRS</scope>
</reference>
<reference key="9">
    <citation type="journal article" date="2010" name="Sci. Signal.">
        <title>Quantitative phosphoproteomics reveals widespread full phosphorylation site occupancy during mitosis.</title>
        <authorList>
            <person name="Olsen J.V."/>
            <person name="Vermeulen M."/>
            <person name="Santamaria A."/>
            <person name="Kumar C."/>
            <person name="Miller M.L."/>
            <person name="Jensen L.J."/>
            <person name="Gnad F."/>
            <person name="Cox J."/>
            <person name="Jensen T.S."/>
            <person name="Nigg E.A."/>
            <person name="Brunak S."/>
            <person name="Mann M."/>
        </authorList>
    </citation>
    <scope>PHOSPHORYLATION [LARGE SCALE ANALYSIS] AT SER-715</scope>
    <scope>IDENTIFICATION BY MASS SPECTROMETRY [LARGE SCALE ANALYSIS]</scope>
    <source>
        <tissue>Cervix carcinoma</tissue>
    </source>
</reference>
<reference key="10">
    <citation type="journal article" date="2011" name="Sci. Signal.">
        <title>H2s-induced sulfhydration of the phosphatase PTP1B and its role in the endoplasmic reticulum stress response.</title>
        <authorList>
            <person name="Krishnan N."/>
            <person name="Fu C."/>
            <person name="Pappin D.J."/>
            <person name="Tonks N.K."/>
        </authorList>
    </citation>
    <scope>PHOSPHORYLATION AT TYR-619</scope>
    <scope>DEPHOSPHORYLATION AT TYR-619</scope>
</reference>
<reference key="11">
    <citation type="journal article" date="2011" name="Sci. Signal.">
        <title>System-wide temporal characterization of the proteome and phosphoproteome of human embryonic stem cell differentiation.</title>
        <authorList>
            <person name="Rigbolt K.T."/>
            <person name="Prokhorova T.A."/>
            <person name="Akimov V."/>
            <person name="Henningsen J."/>
            <person name="Johansen P.T."/>
            <person name="Kratchmarova I."/>
            <person name="Kassem M."/>
            <person name="Mann M."/>
            <person name="Olsen J.V."/>
            <person name="Blagoev B."/>
        </authorList>
    </citation>
    <scope>PHOSPHORYLATION [LARGE SCALE ANALYSIS] AT SER-1094</scope>
    <scope>IDENTIFICATION BY MASS SPECTROMETRY [LARGE SCALE ANALYSIS]</scope>
</reference>
<reference key="12">
    <citation type="journal article" date="2012" name="Nat. Cell Biol.">
        <title>PARP16 is a tail-anchored endoplasmic reticulum protein required for the PERK-and IRE1alpha-mediated unfolded protein response.</title>
        <authorList>
            <person name="Jwa M."/>
            <person name="Chang P."/>
        </authorList>
    </citation>
    <scope>ADP-RIBOSYLATION BY PARP16</scope>
</reference>
<reference key="13">
    <citation type="journal article" date="2014" name="Mol. Cell">
        <title>Protein disulfide isomerase A6 controls the decay of IRE1alpha signaling via disulfide-dependent association.</title>
        <authorList>
            <person name="Eletto D."/>
            <person name="Eletto D."/>
            <person name="Dersh D."/>
            <person name="Gidalevitz T."/>
            <person name="Argon Y."/>
        </authorList>
    </citation>
    <scope>INTERACTION WITH PDIA6</scope>
</reference>
<reference key="14">
    <citation type="journal article" date="2015" name="Breast Cancer Res. Treat.">
        <title>TMEM33: a new stress-inducible endoplasmic reticulum transmembrane protein and modulator of the unfolded protein response signaling.</title>
        <authorList>
            <person name="Sakabe I."/>
            <person name="Hu R."/>
            <person name="Jin L."/>
            <person name="Clarke R."/>
            <person name="Kasid U.N."/>
        </authorList>
    </citation>
    <scope>INTERACTION WITH TMEM33</scope>
</reference>
<reference key="15">
    <citation type="journal article" date="2018" name="Congenit. Anom. (Kyoto)">
        <title>Novel splice site mutation in EIF2AK3 gene causes Wolcott-Rallison syndrome in a consanguineous family from Saudi Arabia.</title>
        <authorList>
            <person name="Al-Aama J.Y."/>
            <person name="Al-Zahrani H.S."/>
            <person name="Jelani M."/>
            <person name="Sabir H.S."/>
            <person name="Al-Saeedi S.A."/>
            <person name="Ahmed S."/>
        </authorList>
    </citation>
    <scope>INVOLVEMENT IN WRS</scope>
</reference>
<reference key="16">
    <citation type="journal article" date="2019" name="BMC Pediatr.">
        <title>EIF2AK3 novel mutation in a child with early-onset diabetes mellitus, a case report.</title>
        <authorList>
            <person name="Fatani T.H."/>
        </authorList>
    </citation>
    <scope>INVOLVEMENT IN WRS</scope>
</reference>
<reference key="17">
    <citation type="journal article" date="2019" name="Cell Rep.">
        <title>LACC1 required for NOD2-induced, ER stress-mediated innate immune outcomes in human macrophages and LACC1 risk variants modulate these outcomes.</title>
        <authorList>
            <person name="Huang C."/>
            <person name="Hedl M."/>
            <person name="Ranjan K."/>
            <person name="Abraham C."/>
        </authorList>
    </citation>
    <scope>INTERACTION WITH LACC1</scope>
</reference>
<reference key="18">
    <citation type="journal article" date="2019" name="Mol. Cell">
        <title>ER and nutrient stress promote assembly of respiratory chain supercomplexes through the PERK-eIF2alpha axis.</title>
        <authorList>
            <person name="Balsa E."/>
            <person name="Soustek M.S."/>
            <person name="Thomas A."/>
            <person name="Cogliati S."/>
            <person name="Garcia-Poyatos C."/>
            <person name="Martin-Garcia E."/>
            <person name="Jedrychowski M."/>
            <person name="Gygi S.P."/>
            <person name="Enriquez J.A."/>
            <person name="Puigserver P."/>
        </authorList>
    </citation>
    <scope>FUNCTION</scope>
</reference>
<reference key="19">
    <citation type="journal article" date="2020" name="BMC Med. Genet.">
        <title>A novel splice site indel alteration in the EIF2AK3 gene is responsible for the first cases of Wolcott-Rallison syndrome in Hungary.</title>
        <authorList>
            <person name="Suemegi A."/>
            <person name="Hendrik Z."/>
            <person name="Gall T."/>
            <person name="Felszeghy E."/>
            <person name="Szakszon K."/>
            <person name="Antal-Szalmas P."/>
            <person name="Beke L."/>
            <person name="Papp A."/>
            <person name="Mehes G."/>
            <person name="Balla J."/>
            <person name="Balla G."/>
        </authorList>
    </citation>
    <scope>INVOLVEMENT IN WRS</scope>
</reference>
<reference key="20">
    <citation type="journal article" date="2021" name="Science">
        <title>QRICH1 dictates the outcome of ER stress through transcriptional control of proteostasis.</title>
        <authorList>
            <person name="You K."/>
            <person name="Wang L."/>
            <person name="Chou C.H."/>
            <person name="Liu K."/>
            <person name="Nakata T."/>
            <person name="Jaiswal A."/>
            <person name="Yao J."/>
            <person name="Lefkovith A."/>
            <person name="Omar A."/>
            <person name="Perrigoue J.G."/>
            <person name="Towne J.E."/>
            <person name="Regev A."/>
            <person name="Graham D.B."/>
            <person name="Xavier R.J."/>
        </authorList>
    </citation>
    <scope>FUNCTION</scope>
</reference>
<reference key="21">
    <citation type="journal article" date="2024" name="Science">
        <title>PERK-ATAD3A interaction provides a subcellular safe haven for protein synthesis during ER stress.</title>
        <authorList>
            <person name="Brar K.K."/>
            <person name="Hughes D.T."/>
            <person name="Morris J.L."/>
            <person name="Subramanian K."/>
            <person name="Krishna S."/>
            <person name="Gao F."/>
            <person name="Rieder L.S."/>
            <person name="Uhrig S."/>
            <person name="Freeman J."/>
            <person name="Smith H.L."/>
            <person name="Jukes-Jones R."/>
            <person name="Avezov E."/>
            <person name="Nunnari J."/>
            <person name="Prudent J."/>
            <person name="Butcher A.J."/>
            <person name="Mallucci G.R."/>
        </authorList>
    </citation>
    <scope>FUNCTION</scope>
    <scope>SUBCELLULAR LOCATION</scope>
    <scope>ACTIVITY REGULATION</scope>
    <scope>INTERACTION WITH ATAD3A</scope>
</reference>
<reference evidence="38" key="22">
    <citation type="journal article" date="2015" name="EMBO J.">
        <title>Crystal structures reveal transient PERK luminal domain tetramerization in endoplasmic reticulum stress signaling.</title>
        <authorList>
            <person name="Carrara M."/>
            <person name="Prischi F."/>
            <person name="Nowak P.R."/>
            <person name="Ali M.M."/>
        </authorList>
    </citation>
    <scope>X-RAY CRYSTALLOGRAPHY (3.14 ANGSTROMS) OF 104-403</scope>
    <scope>FUNCTION</scope>
    <scope>SUBUNIT</scope>
    <scope>MUTAGENESIS OF TRP-164; LEU-388; LEU-395 AND LEU-397</scope>
</reference>
<reference evidence="39" key="23">
    <citation type="journal article" date="2016" name="Acta Crystallogr. D Struct. Biol.">
        <title>The ER stress sensor PERK luminal domain functions as a molecular chaperone to interact with misfolded proteins.</title>
        <authorList>
            <person name="Wang P."/>
            <person name="Li J."/>
            <person name="Sha B."/>
        </authorList>
    </citation>
    <scope>X-RAY CRYSTALLOGRAPHY (3.21 ANGSTROMS) OF 95-420</scope>
    <scope>FUNCTION</scope>
</reference>
<reference key="24">
    <citation type="journal article" date="2002" name="Diabetes">
        <title>Loss of kinase activity in a patient with Wolcott-Rallison syndrome caused by a novel mutation in the EIF2AK3 gene.</title>
        <authorList>
            <person name="Biason-Lauber A."/>
            <person name="Lang-Muritano M."/>
            <person name="Vaccaro T."/>
            <person name="Schoenle E.J."/>
        </authorList>
    </citation>
    <scope>VARIANT WRS PRO-878</scope>
    <scope>FUNCTION</scope>
    <scope>CHARACTERIZATION OF VARIANT WRS PRO-878</scope>
</reference>
<reference key="25">
    <citation type="journal article" date="2006" name="Clin. Genet.">
        <title>A novel mutation in the EIF2AK3 gene with variable expressivity in two patients with Wolcott-Rallison syndrome.</title>
        <authorList>
            <person name="Durocher F."/>
            <person name="Faure R."/>
            <person name="Labrie Y."/>
            <person name="Pelletier L."/>
            <person name="Bouchard I."/>
            <person name="Laframboise R."/>
        </authorList>
    </citation>
    <scope>VARIANT WRS 332-GLU--ASN-1116 DEL</scope>
</reference>
<reference key="26">
    <citation type="journal article" date="2007" name="Nature">
        <title>Patterns of somatic mutation in human cancer genomes.</title>
        <authorList>
            <person name="Greenman C."/>
            <person name="Stephens P."/>
            <person name="Smith R."/>
            <person name="Dalgliesh G.L."/>
            <person name="Hunter C."/>
            <person name="Bignell G."/>
            <person name="Davies H."/>
            <person name="Teague J."/>
            <person name="Butler A."/>
            <person name="Stevens C."/>
            <person name="Edkins S."/>
            <person name="O'Meara S."/>
            <person name="Vastrik I."/>
            <person name="Schmidt E.E."/>
            <person name="Avis T."/>
            <person name="Barthorpe S."/>
            <person name="Bhamra G."/>
            <person name="Buck G."/>
            <person name="Choudhury B."/>
            <person name="Clements J."/>
            <person name="Cole J."/>
            <person name="Dicks E."/>
            <person name="Forbes S."/>
            <person name="Gray K."/>
            <person name="Halliday K."/>
            <person name="Harrison R."/>
            <person name="Hills K."/>
            <person name="Hinton J."/>
            <person name="Jenkinson A."/>
            <person name="Jones D."/>
            <person name="Menzies A."/>
            <person name="Mironenko T."/>
            <person name="Perry J."/>
            <person name="Raine K."/>
            <person name="Richardson D."/>
            <person name="Shepherd R."/>
            <person name="Small A."/>
            <person name="Tofts C."/>
            <person name="Varian J."/>
            <person name="Webb T."/>
            <person name="West S."/>
            <person name="Widaa S."/>
            <person name="Yates A."/>
            <person name="Cahill D.P."/>
            <person name="Louis D.N."/>
            <person name="Goldstraw P."/>
            <person name="Nicholson A.G."/>
            <person name="Brasseur F."/>
            <person name="Looijenga L."/>
            <person name="Weber B.L."/>
            <person name="Chiew Y.-E."/>
            <person name="DeFazio A."/>
            <person name="Greaves M.F."/>
            <person name="Green A.R."/>
            <person name="Campbell P."/>
            <person name="Birney E."/>
            <person name="Easton D.F."/>
            <person name="Chenevix-Trench G."/>
            <person name="Tan M.-H."/>
            <person name="Khoo S.K."/>
            <person name="Teh B.T."/>
            <person name="Yuen S.T."/>
            <person name="Leung S.Y."/>
            <person name="Wooster R."/>
            <person name="Futreal P.A."/>
            <person name="Stratton M.R."/>
        </authorList>
    </citation>
    <scope>VARIANTS [LARGE SCALE ANALYSIS] CYS-136; VAL-566 AND LEU-716</scope>
</reference>
<reference key="27">
    <citation type="journal article" date="2014" name="Eur. J. Pediatr.">
        <title>Primary hypothyroidism and nipple hypoplasia in a girl with Wolcott-Rallison syndrome.</title>
        <authorList>
            <person name="Spehar Uroic A."/>
            <person name="Mulliqi Kotori V."/>
            <person name="Rojnic Putarek N."/>
            <person name="Kusec V."/>
            <person name="Dumic M."/>
        </authorList>
    </citation>
    <scope>VARIANT WRS 903-ARG--ASN-1116 DEL</scope>
</reference>
<reference key="28">
    <citation type="journal article" date="2014" name="Pediatr. Diabetes">
        <title>EIF2AK3 mutations in South Indian children with permanent neonatal diabetes mellitus associated with Wolcott-Rallison syndrome.</title>
        <authorList>
            <person name="Jahnavi S."/>
            <person name="Poovazhagi V."/>
            <person name="Kanthimathi S."/>
            <person name="Gayathri V."/>
            <person name="Mohan V."/>
            <person name="Radha V."/>
        </authorList>
    </citation>
    <scope>VARIANTS WRS SER-658 AND 1065-ARG--ASN-1116 DEL</scope>
</reference>
<reference key="29">
    <citation type="journal article" date="2016" name="J. Clin. Res. Pediatr. Endocrinol.">
        <title>Wolcott-Rallison Syndrome with Novel EIF2AK3 Gene Mutation.</title>
        <authorList>
            <person name="Guerbuez F."/>
            <person name="Yueksel B."/>
            <person name="Topaloglu A.K."/>
        </authorList>
    </citation>
    <scope>VARIANT WRS 334-GLN--ASN-1116 DEL</scope>
</reference>
<reference key="30">
    <citation type="journal article" date="2019" name="Exp. Ther. Med.">
        <title>Wolcott-Rallison syndrome due to the same mutation in EIF2AK3 (c.205G&gt;T) in two unrelated families: A case report.</title>
        <authorList>
            <person name="Huang A."/>
            <person name="Wei H."/>
        </authorList>
    </citation>
    <scope>VARIANT WRS 69-GLU--ASN-1116 DEL</scope>
</reference>
<reference key="31">
    <citation type="journal article" date="2021" name="Front. Pediatr.">
        <title>Identification of Two Novel Compound Heterozygous EIF2AK3 Mutations Underlying Wolcott-Rallison Syndrome in a Chinese Family.</title>
        <authorList>
            <person name="Zhao N."/>
            <person name="Yang Y."/>
            <person name="Li P."/>
            <person name="Xiong Q."/>
            <person name="Xiao H."/>
            <person name="Wu C."/>
        </authorList>
    </citation>
    <scope>VARIANTS WRS SER-940 AND GLN-994</scope>
</reference>
<evidence type="ECO:0000250" key="1">
    <source>
        <dbReference type="UniProtKB" id="Q9Z2B5"/>
    </source>
</evidence>
<evidence type="ECO:0000255" key="2"/>
<evidence type="ECO:0000255" key="3">
    <source>
        <dbReference type="PROSITE-ProRule" id="PRU00159"/>
    </source>
</evidence>
<evidence type="ECO:0000255" key="4">
    <source>
        <dbReference type="PROSITE-ProRule" id="PRU10027"/>
    </source>
</evidence>
<evidence type="ECO:0000256" key="5">
    <source>
        <dbReference type="SAM" id="MobiDB-lite"/>
    </source>
</evidence>
<evidence type="ECO:0000269" key="6">
    <source>
    </source>
</evidence>
<evidence type="ECO:0000269" key="7">
    <source>
    </source>
</evidence>
<evidence type="ECO:0000269" key="8">
    <source>
    </source>
</evidence>
<evidence type="ECO:0000269" key="9">
    <source>
    </source>
</evidence>
<evidence type="ECO:0000269" key="10">
    <source>
    </source>
</evidence>
<evidence type="ECO:0000269" key="11">
    <source>
    </source>
</evidence>
<evidence type="ECO:0000269" key="12">
    <source>
    </source>
</evidence>
<evidence type="ECO:0000269" key="13">
    <source>
    </source>
</evidence>
<evidence type="ECO:0000269" key="14">
    <source>
    </source>
</evidence>
<evidence type="ECO:0000269" key="15">
    <source>
    </source>
</evidence>
<evidence type="ECO:0000269" key="16">
    <source>
    </source>
</evidence>
<evidence type="ECO:0000269" key="17">
    <source>
    </source>
</evidence>
<evidence type="ECO:0000269" key="18">
    <source>
    </source>
</evidence>
<evidence type="ECO:0000269" key="19">
    <source>
    </source>
</evidence>
<evidence type="ECO:0000269" key="20">
    <source>
    </source>
</evidence>
<evidence type="ECO:0000269" key="21">
    <source>
    </source>
</evidence>
<evidence type="ECO:0000269" key="22">
    <source>
    </source>
</evidence>
<evidence type="ECO:0000269" key="23">
    <source>
    </source>
</evidence>
<evidence type="ECO:0000269" key="24">
    <source>
    </source>
</evidence>
<evidence type="ECO:0000269" key="25">
    <source>
    </source>
</evidence>
<evidence type="ECO:0000269" key="26">
    <source>
    </source>
</evidence>
<evidence type="ECO:0000269" key="27">
    <source>
    </source>
</evidence>
<evidence type="ECO:0000269" key="28">
    <source>
    </source>
</evidence>
<evidence type="ECO:0000269" key="29">
    <source>
    </source>
</evidence>
<evidence type="ECO:0000269" key="30">
    <source>
    </source>
</evidence>
<evidence type="ECO:0000269" key="31">
    <source>
    </source>
</evidence>
<evidence type="ECO:0000269" key="32">
    <source>
    </source>
</evidence>
<evidence type="ECO:0000303" key="33">
    <source>
    </source>
</evidence>
<evidence type="ECO:0000303" key="34">
    <source>
    </source>
</evidence>
<evidence type="ECO:0000303" key="35">
    <source>
    </source>
</evidence>
<evidence type="ECO:0000305" key="36"/>
<evidence type="ECO:0000312" key="37">
    <source>
        <dbReference type="HGNC" id="HGNC:3255"/>
    </source>
</evidence>
<evidence type="ECO:0007744" key="38">
    <source>
        <dbReference type="PDB" id="4YZS"/>
    </source>
</evidence>
<evidence type="ECO:0007744" key="39">
    <source>
        <dbReference type="PDB" id="5SV7"/>
    </source>
</evidence>
<evidence type="ECO:0007744" key="40">
    <source>
    </source>
</evidence>
<evidence type="ECO:0007744" key="41">
    <source>
    </source>
</evidence>
<evidence type="ECO:0007829" key="42">
    <source>
        <dbReference type="PDB" id="4X7K"/>
    </source>
</evidence>
<evidence type="ECO:0007829" key="43">
    <source>
        <dbReference type="PDB" id="4YZS"/>
    </source>
</evidence>